<reference key="1">
    <citation type="journal article" date="2010" name="Genome Biol. Evol.">
        <title>Continuing evolution of Burkholderia mallei through genome reduction and large-scale rearrangements.</title>
        <authorList>
            <person name="Losada L."/>
            <person name="Ronning C.M."/>
            <person name="DeShazer D."/>
            <person name="Woods D."/>
            <person name="Fedorova N."/>
            <person name="Kim H.S."/>
            <person name="Shabalina S.A."/>
            <person name="Pearson T.R."/>
            <person name="Brinkac L."/>
            <person name="Tan P."/>
            <person name="Nandi T."/>
            <person name="Crabtree J."/>
            <person name="Badger J."/>
            <person name="Beckstrom-Sternberg S."/>
            <person name="Saqib M."/>
            <person name="Schutzer S.E."/>
            <person name="Keim P."/>
            <person name="Nierman W.C."/>
        </authorList>
    </citation>
    <scope>NUCLEOTIDE SEQUENCE [LARGE SCALE GENOMIC DNA]</scope>
    <source>
        <strain>668</strain>
    </source>
</reference>
<gene>
    <name evidence="1" type="primary">acpP</name>
    <name type="ordered locus">BURPS668_2789</name>
</gene>
<dbReference type="EMBL" id="CP000570">
    <property type="protein sequence ID" value="ABN83623.1"/>
    <property type="molecule type" value="Genomic_DNA"/>
</dbReference>
<dbReference type="RefSeq" id="WP_004197638.1">
    <property type="nucleotide sequence ID" value="NC_009074.1"/>
</dbReference>
<dbReference type="SMR" id="A3NBT9"/>
<dbReference type="GeneID" id="98102461"/>
<dbReference type="KEGG" id="bpd:BURPS668_2789"/>
<dbReference type="HOGENOM" id="CLU_108696_5_1_4"/>
<dbReference type="UniPathway" id="UPA00094"/>
<dbReference type="GO" id="GO:0005829">
    <property type="term" value="C:cytosol"/>
    <property type="evidence" value="ECO:0007669"/>
    <property type="project" value="TreeGrafter"/>
</dbReference>
<dbReference type="GO" id="GO:0016020">
    <property type="term" value="C:membrane"/>
    <property type="evidence" value="ECO:0007669"/>
    <property type="project" value="GOC"/>
</dbReference>
<dbReference type="GO" id="GO:0000035">
    <property type="term" value="F:acyl binding"/>
    <property type="evidence" value="ECO:0007669"/>
    <property type="project" value="TreeGrafter"/>
</dbReference>
<dbReference type="GO" id="GO:0000036">
    <property type="term" value="F:acyl carrier activity"/>
    <property type="evidence" value="ECO:0007669"/>
    <property type="project" value="UniProtKB-UniRule"/>
</dbReference>
<dbReference type="GO" id="GO:0009245">
    <property type="term" value="P:lipid A biosynthetic process"/>
    <property type="evidence" value="ECO:0007669"/>
    <property type="project" value="TreeGrafter"/>
</dbReference>
<dbReference type="FunFam" id="1.10.1200.10:FF:000001">
    <property type="entry name" value="Acyl carrier protein"/>
    <property type="match status" value="1"/>
</dbReference>
<dbReference type="Gene3D" id="1.10.1200.10">
    <property type="entry name" value="ACP-like"/>
    <property type="match status" value="1"/>
</dbReference>
<dbReference type="HAMAP" id="MF_01217">
    <property type="entry name" value="Acyl_carrier"/>
    <property type="match status" value="1"/>
</dbReference>
<dbReference type="InterPro" id="IPR003231">
    <property type="entry name" value="ACP"/>
</dbReference>
<dbReference type="InterPro" id="IPR036736">
    <property type="entry name" value="ACP-like_sf"/>
</dbReference>
<dbReference type="InterPro" id="IPR009081">
    <property type="entry name" value="PP-bd_ACP"/>
</dbReference>
<dbReference type="InterPro" id="IPR006162">
    <property type="entry name" value="Ppantetheine_attach_site"/>
</dbReference>
<dbReference type="NCBIfam" id="TIGR00517">
    <property type="entry name" value="acyl_carrier"/>
    <property type="match status" value="1"/>
</dbReference>
<dbReference type="NCBIfam" id="NF002148">
    <property type="entry name" value="PRK00982.1-2"/>
    <property type="match status" value="1"/>
</dbReference>
<dbReference type="NCBIfam" id="NF002149">
    <property type="entry name" value="PRK00982.1-3"/>
    <property type="match status" value="1"/>
</dbReference>
<dbReference type="NCBIfam" id="NF002150">
    <property type="entry name" value="PRK00982.1-4"/>
    <property type="match status" value="1"/>
</dbReference>
<dbReference type="NCBIfam" id="NF002151">
    <property type="entry name" value="PRK00982.1-5"/>
    <property type="match status" value="1"/>
</dbReference>
<dbReference type="PANTHER" id="PTHR20863">
    <property type="entry name" value="ACYL CARRIER PROTEIN"/>
    <property type="match status" value="1"/>
</dbReference>
<dbReference type="PANTHER" id="PTHR20863:SF76">
    <property type="entry name" value="CARRIER DOMAIN-CONTAINING PROTEIN"/>
    <property type="match status" value="1"/>
</dbReference>
<dbReference type="Pfam" id="PF00550">
    <property type="entry name" value="PP-binding"/>
    <property type="match status" value="1"/>
</dbReference>
<dbReference type="SUPFAM" id="SSF47336">
    <property type="entry name" value="ACP-like"/>
    <property type="match status" value="1"/>
</dbReference>
<dbReference type="PROSITE" id="PS50075">
    <property type="entry name" value="CARRIER"/>
    <property type="match status" value="1"/>
</dbReference>
<dbReference type="PROSITE" id="PS00012">
    <property type="entry name" value="PHOSPHOPANTETHEINE"/>
    <property type="match status" value="1"/>
</dbReference>
<accession>A3NBT9</accession>
<protein>
    <recommendedName>
        <fullName evidence="1">Acyl carrier protein</fullName>
        <shortName evidence="1">ACP</shortName>
    </recommendedName>
</protein>
<organism>
    <name type="scientific">Burkholderia pseudomallei (strain 668)</name>
    <dbReference type="NCBI Taxonomy" id="320373"/>
    <lineage>
        <taxon>Bacteria</taxon>
        <taxon>Pseudomonadati</taxon>
        <taxon>Pseudomonadota</taxon>
        <taxon>Betaproteobacteria</taxon>
        <taxon>Burkholderiales</taxon>
        <taxon>Burkholderiaceae</taxon>
        <taxon>Burkholderia</taxon>
        <taxon>pseudomallei group</taxon>
    </lineage>
</organism>
<comment type="function">
    <text evidence="1">Carrier of the growing fatty acid chain in fatty acid biosynthesis.</text>
</comment>
<comment type="pathway">
    <text evidence="1">Lipid metabolism; fatty acid biosynthesis.</text>
</comment>
<comment type="subcellular location">
    <subcellularLocation>
        <location evidence="1">Cytoplasm</location>
    </subcellularLocation>
</comment>
<comment type="PTM">
    <text evidence="1">4'-phosphopantetheine is transferred from CoA to a specific serine of apo-ACP by AcpS. This modification is essential for activity because fatty acids are bound in thioester linkage to the sulfhydryl of the prosthetic group.</text>
</comment>
<comment type="similarity">
    <text evidence="1">Belongs to the acyl carrier protein (ACP) family.</text>
</comment>
<proteinExistence type="inferred from homology"/>
<keyword id="KW-0963">Cytoplasm</keyword>
<keyword id="KW-0275">Fatty acid biosynthesis</keyword>
<keyword id="KW-0276">Fatty acid metabolism</keyword>
<keyword id="KW-0444">Lipid biosynthesis</keyword>
<keyword id="KW-0443">Lipid metabolism</keyword>
<keyword id="KW-0596">Phosphopantetheine</keyword>
<keyword id="KW-0597">Phosphoprotein</keyword>
<name>ACP_BURP6</name>
<evidence type="ECO:0000255" key="1">
    <source>
        <dbReference type="HAMAP-Rule" id="MF_01217"/>
    </source>
</evidence>
<evidence type="ECO:0000255" key="2">
    <source>
        <dbReference type="PROSITE-ProRule" id="PRU00258"/>
    </source>
</evidence>
<sequence>MDNIEQRVKKIVAEQLGVAEAEIKNEASFVNDLGADSLDTVELVMALEDEFGMEIPDEEAEKITTVQQAIDYARANVKA</sequence>
<feature type="chain" id="PRO_1000066576" description="Acyl carrier protein">
    <location>
        <begin position="1"/>
        <end position="79"/>
    </location>
</feature>
<feature type="domain" description="Carrier" evidence="2">
    <location>
        <begin position="2"/>
        <end position="77"/>
    </location>
</feature>
<feature type="modified residue" description="O-(pantetheine 4'-phosphoryl)serine" evidence="2">
    <location>
        <position position="37"/>
    </location>
</feature>